<comment type="subunit">
    <text evidence="1">Monomer.</text>
</comment>
<comment type="subcellular location">
    <subcellularLocation>
        <location>Secreted</location>
    </subcellularLocation>
</comment>
<comment type="tissue specificity">
    <text>Expressed by the venom gland.</text>
</comment>
<comment type="similarity">
    <text evidence="3">Belongs to the peptidase S1 family. Snake venom subfamily.</text>
</comment>
<comment type="caution">
    <text evidence="4">Ala-206 is present instead of the conserved Ser which is expected to be an active site residue.</text>
</comment>
<sequence>MGLIRVLANLLILQLSYAQKSSELVIGGDECNINEHRFLAIVHTDISLCTGTLINQEWVLTAAHCDGGNMDIYLGVHNESVRYDDEEGRVPAEKFFCLSSRNFTKWDKDIMLIRLNIPVRNSAHIAPLSLPSSPPSVGSVCRVMGWGTITSPNETYPDVPHCANINLFDYEVCLAAYPEFGLPATSKTLCAGILEGGKDTCVGDAGGPLICNGQFQGILSWGDDPCAQPRLPAVYTKVFDHLDWIQSIIAGNTDATCPFVNF</sequence>
<evidence type="ECO:0000250" key="1"/>
<evidence type="ECO:0000255" key="2"/>
<evidence type="ECO:0000255" key="3">
    <source>
        <dbReference type="PROSITE-ProRule" id="PRU00274"/>
    </source>
</evidence>
<evidence type="ECO:0000305" key="4"/>
<proteinExistence type="evidence at protein level"/>
<dbReference type="EMBL" id="JU173724">
    <property type="protein sequence ID" value="AFJ49250.1"/>
    <property type="molecule type" value="mRNA"/>
</dbReference>
<dbReference type="SMR" id="J3SBQ3"/>
<dbReference type="GO" id="GO:0005576">
    <property type="term" value="C:extracellular region"/>
    <property type="evidence" value="ECO:0007669"/>
    <property type="project" value="UniProtKB-SubCell"/>
</dbReference>
<dbReference type="GO" id="GO:0030141">
    <property type="term" value="C:secretory granule"/>
    <property type="evidence" value="ECO:0007669"/>
    <property type="project" value="TreeGrafter"/>
</dbReference>
<dbReference type="GO" id="GO:0004252">
    <property type="term" value="F:serine-type endopeptidase activity"/>
    <property type="evidence" value="ECO:0007669"/>
    <property type="project" value="InterPro"/>
</dbReference>
<dbReference type="GO" id="GO:0090729">
    <property type="term" value="F:toxin activity"/>
    <property type="evidence" value="ECO:0007669"/>
    <property type="project" value="UniProtKB-KW"/>
</dbReference>
<dbReference type="GO" id="GO:0006508">
    <property type="term" value="P:proteolysis"/>
    <property type="evidence" value="ECO:0007669"/>
    <property type="project" value="InterPro"/>
</dbReference>
<dbReference type="CDD" id="cd00190">
    <property type="entry name" value="Tryp_SPc"/>
    <property type="match status" value="1"/>
</dbReference>
<dbReference type="FunFam" id="2.40.10.10:FF:000158">
    <property type="entry name" value="Thrombin-like enzyme saxthrombin"/>
    <property type="match status" value="1"/>
</dbReference>
<dbReference type="Gene3D" id="2.40.10.10">
    <property type="entry name" value="Trypsin-like serine proteases"/>
    <property type="match status" value="2"/>
</dbReference>
<dbReference type="InterPro" id="IPR009003">
    <property type="entry name" value="Peptidase_S1_PA"/>
</dbReference>
<dbReference type="InterPro" id="IPR043504">
    <property type="entry name" value="Peptidase_S1_PA_chymotrypsin"/>
</dbReference>
<dbReference type="InterPro" id="IPR001314">
    <property type="entry name" value="Peptidase_S1A"/>
</dbReference>
<dbReference type="InterPro" id="IPR001254">
    <property type="entry name" value="Trypsin_dom"/>
</dbReference>
<dbReference type="InterPro" id="IPR018114">
    <property type="entry name" value="TRYPSIN_HIS"/>
</dbReference>
<dbReference type="PANTHER" id="PTHR24271:SF47">
    <property type="entry name" value="KALLIKREIN-1"/>
    <property type="match status" value="1"/>
</dbReference>
<dbReference type="PANTHER" id="PTHR24271">
    <property type="entry name" value="KALLIKREIN-RELATED"/>
    <property type="match status" value="1"/>
</dbReference>
<dbReference type="Pfam" id="PF00089">
    <property type="entry name" value="Trypsin"/>
    <property type="match status" value="1"/>
</dbReference>
<dbReference type="PRINTS" id="PR00722">
    <property type="entry name" value="CHYMOTRYPSIN"/>
</dbReference>
<dbReference type="SMART" id="SM00020">
    <property type="entry name" value="Tryp_SPc"/>
    <property type="match status" value="1"/>
</dbReference>
<dbReference type="SUPFAM" id="SSF50494">
    <property type="entry name" value="Trypsin-like serine proteases"/>
    <property type="match status" value="1"/>
</dbReference>
<dbReference type="PROSITE" id="PS50240">
    <property type="entry name" value="TRYPSIN_DOM"/>
    <property type="match status" value="1"/>
</dbReference>
<dbReference type="PROSITE" id="PS00134">
    <property type="entry name" value="TRYPSIN_HIS"/>
    <property type="match status" value="1"/>
</dbReference>
<organism>
    <name type="scientific">Crotalus adamanteus</name>
    <name type="common">Eastern diamondback rattlesnake</name>
    <dbReference type="NCBI Taxonomy" id="8729"/>
    <lineage>
        <taxon>Eukaryota</taxon>
        <taxon>Metazoa</taxon>
        <taxon>Chordata</taxon>
        <taxon>Craniata</taxon>
        <taxon>Vertebrata</taxon>
        <taxon>Euteleostomi</taxon>
        <taxon>Lepidosauria</taxon>
        <taxon>Squamata</taxon>
        <taxon>Bifurcata</taxon>
        <taxon>Unidentata</taxon>
        <taxon>Episquamata</taxon>
        <taxon>Toxicofera</taxon>
        <taxon>Serpentes</taxon>
        <taxon>Colubroidea</taxon>
        <taxon>Viperidae</taxon>
        <taxon>Crotalinae</taxon>
        <taxon>Crotalus</taxon>
    </lineage>
</organism>
<keyword id="KW-1015">Disulfide bond</keyword>
<keyword id="KW-0325">Glycoprotein</keyword>
<keyword id="KW-0964">Secreted</keyword>
<keyword id="KW-0721">Serine protease homolog</keyword>
<keyword id="KW-0732">Signal</keyword>
<keyword id="KW-0800">Toxin</keyword>
<accession>J3SBQ3</accession>
<name>VSPD_CROAD</name>
<feature type="signal peptide" evidence="2">
    <location>
        <begin position="1"/>
        <end position="18"/>
    </location>
</feature>
<feature type="propeptide" id="PRO_0000425647" evidence="1">
    <location>
        <begin position="19"/>
        <end position="24"/>
    </location>
</feature>
<feature type="chain" id="PRO_0000425648" description="Inactive snake venom serine proteinase 13">
    <location>
        <begin position="25"/>
        <end position="262"/>
    </location>
</feature>
<feature type="domain" description="Peptidase S1" evidence="3">
    <location>
        <begin position="25"/>
        <end position="250"/>
    </location>
</feature>
<feature type="glycosylation site" description="N-linked (GlcNAc...) asparagine" evidence="2">
    <location>
        <position position="78"/>
    </location>
</feature>
<feature type="glycosylation site" description="N-linked (GlcNAc...) asparagine" evidence="2">
    <location>
        <position position="102"/>
    </location>
</feature>
<feature type="glycosylation site" description="N-linked (GlcNAc...) asparagine" evidence="2">
    <location>
        <position position="153"/>
    </location>
</feature>
<feature type="disulfide bond" evidence="3">
    <location>
        <begin position="31"/>
        <end position="162"/>
    </location>
</feature>
<feature type="disulfide bond" evidence="3">
    <location>
        <begin position="49"/>
        <end position="65"/>
    </location>
</feature>
<feature type="disulfide bond" evidence="3">
    <location>
        <begin position="97"/>
        <end position="257"/>
    </location>
</feature>
<feature type="disulfide bond" evidence="3">
    <location>
        <begin position="141"/>
        <end position="211"/>
    </location>
</feature>
<feature type="disulfide bond" evidence="3">
    <location>
        <begin position="173"/>
        <end position="190"/>
    </location>
</feature>
<feature type="disulfide bond" evidence="3">
    <location>
        <begin position="201"/>
        <end position="226"/>
    </location>
</feature>
<protein>
    <recommendedName>
        <fullName>Inactive snake venom serine proteinase 13</fullName>
        <shortName>SVSP</shortName>
    </recommendedName>
</protein>
<reference key="1">
    <citation type="journal article" date="2012" name="BMC Genomics">
        <title>The venom-gland transcriptome of the eastern diamondback rattlesnake (Crotalus adamanteus).</title>
        <authorList>
            <person name="Rokyta D.R."/>
            <person name="Lemmon A.R."/>
            <person name="Margres M.J."/>
            <person name="Aronow K."/>
        </authorList>
    </citation>
    <scope>NUCLEOTIDE SEQUENCE [MRNA]</scope>
    <source>
        <tissue>Venom gland</tissue>
    </source>
</reference>
<reference key="2">
    <citation type="journal article" date="2014" name="J. Proteomics">
        <title>Linking the transcriptome and proteome to characterize the venom of the eastern diamondback rattlesnake (Crotalus adamanteus).</title>
        <authorList>
            <person name="Margres M.J."/>
            <person name="McGivern J.J."/>
            <person name="Wray K.P."/>
            <person name="Seavy M."/>
            <person name="Calvin K."/>
            <person name="Rokyta D.R."/>
        </authorList>
    </citation>
    <scope>IDENTIFICATION BY MASS SPECTROMETRY</scope>
    <source>
        <tissue>Venom</tissue>
    </source>
</reference>